<name>BCL9_MOUSE</name>
<organism>
    <name type="scientific">Mus musculus</name>
    <name type="common">Mouse</name>
    <dbReference type="NCBI Taxonomy" id="10090"/>
    <lineage>
        <taxon>Eukaryota</taxon>
        <taxon>Metazoa</taxon>
        <taxon>Chordata</taxon>
        <taxon>Craniata</taxon>
        <taxon>Vertebrata</taxon>
        <taxon>Euteleostomi</taxon>
        <taxon>Mammalia</taxon>
        <taxon>Eutheria</taxon>
        <taxon>Euarchontoglires</taxon>
        <taxon>Glires</taxon>
        <taxon>Rodentia</taxon>
        <taxon>Myomorpha</taxon>
        <taxon>Muroidea</taxon>
        <taxon>Muridae</taxon>
        <taxon>Murinae</taxon>
        <taxon>Mus</taxon>
        <taxon>Mus</taxon>
    </lineage>
</organism>
<protein>
    <recommendedName>
        <fullName>B-cell CLL/lymphoma 9 protein</fullName>
        <shortName>B-cell lymphoma 9 protein</shortName>
        <shortName>Bcl-9</shortName>
    </recommendedName>
</protein>
<evidence type="ECO:0000250" key="1"/>
<evidence type="ECO:0000250" key="2">
    <source>
        <dbReference type="UniProtKB" id="O00512"/>
    </source>
</evidence>
<evidence type="ECO:0000256" key="3">
    <source>
        <dbReference type="SAM" id="MobiDB-lite"/>
    </source>
</evidence>
<evidence type="ECO:0000269" key="4">
    <source>
    </source>
</evidence>
<evidence type="ECO:0000305" key="5"/>
<evidence type="ECO:0007744" key="6">
    <source>
    </source>
</evidence>
<evidence type="ECO:0007744" key="7">
    <source>
    </source>
</evidence>
<evidence type="ECO:0007744" key="8">
    <source>
    </source>
</evidence>
<evidence type="ECO:0007744" key="9">
    <source>
    </source>
</evidence>
<keyword id="KW-0007">Acetylation</keyword>
<keyword id="KW-0488">Methylation</keyword>
<keyword id="KW-0539">Nucleus</keyword>
<keyword id="KW-0597">Phosphoprotein</keyword>
<keyword id="KW-1185">Reference proteome</keyword>
<keyword id="KW-0879">Wnt signaling pathway</keyword>
<reference key="1">
    <citation type="journal article" date="2004" name="Genes Dev.">
        <title>Essential role of BCL9-2 in the switch between beta-catenin's adhesive and transcriptional functions.</title>
        <authorList>
            <person name="Brembeck F.H."/>
            <person name="Schwarz-Romond T."/>
            <person name="Bakkers J."/>
            <person name="Wilhelm S."/>
            <person name="Hammerschmidt M."/>
            <person name="Birchmeier W."/>
        </authorList>
    </citation>
    <scope>NUCLEOTIDE SEQUENCE [MRNA]</scope>
    <scope>FUNCTION</scope>
    <scope>SUBCELLULAR LOCATION</scope>
    <source>
        <strain>C57BL/6J</strain>
    </source>
</reference>
<reference key="2">
    <citation type="journal article" date="2004" name="Genome Res.">
        <title>The status, quality, and expansion of the NIH full-length cDNA project: the Mammalian Gene Collection (MGC).</title>
        <authorList>
            <consortium name="The MGC Project Team"/>
        </authorList>
    </citation>
    <scope>NUCLEOTIDE SEQUENCE [LARGE SCALE MRNA]</scope>
    <source>
        <tissue>Brain</tissue>
        <tissue>Mammary gland</tissue>
    </source>
</reference>
<reference key="3">
    <citation type="journal article" date="2005" name="Science">
        <title>The transcriptional landscape of the mammalian genome.</title>
        <authorList>
            <person name="Carninci P."/>
            <person name="Kasukawa T."/>
            <person name="Katayama S."/>
            <person name="Gough J."/>
            <person name="Frith M.C."/>
            <person name="Maeda N."/>
            <person name="Oyama R."/>
            <person name="Ravasi T."/>
            <person name="Lenhard B."/>
            <person name="Wells C."/>
            <person name="Kodzius R."/>
            <person name="Shimokawa K."/>
            <person name="Bajic V.B."/>
            <person name="Brenner S.E."/>
            <person name="Batalov S."/>
            <person name="Forrest A.R."/>
            <person name="Zavolan M."/>
            <person name="Davis M.J."/>
            <person name="Wilming L.G."/>
            <person name="Aidinis V."/>
            <person name="Allen J.E."/>
            <person name="Ambesi-Impiombato A."/>
            <person name="Apweiler R."/>
            <person name="Aturaliya R.N."/>
            <person name="Bailey T.L."/>
            <person name="Bansal M."/>
            <person name="Baxter L."/>
            <person name="Beisel K.W."/>
            <person name="Bersano T."/>
            <person name="Bono H."/>
            <person name="Chalk A.M."/>
            <person name="Chiu K.P."/>
            <person name="Choudhary V."/>
            <person name="Christoffels A."/>
            <person name="Clutterbuck D.R."/>
            <person name="Crowe M.L."/>
            <person name="Dalla E."/>
            <person name="Dalrymple B.P."/>
            <person name="de Bono B."/>
            <person name="Della Gatta G."/>
            <person name="di Bernardo D."/>
            <person name="Down T."/>
            <person name="Engstrom P."/>
            <person name="Fagiolini M."/>
            <person name="Faulkner G."/>
            <person name="Fletcher C.F."/>
            <person name="Fukushima T."/>
            <person name="Furuno M."/>
            <person name="Futaki S."/>
            <person name="Gariboldi M."/>
            <person name="Georgii-Hemming P."/>
            <person name="Gingeras T.R."/>
            <person name="Gojobori T."/>
            <person name="Green R.E."/>
            <person name="Gustincich S."/>
            <person name="Harbers M."/>
            <person name="Hayashi Y."/>
            <person name="Hensch T.K."/>
            <person name="Hirokawa N."/>
            <person name="Hill D."/>
            <person name="Huminiecki L."/>
            <person name="Iacono M."/>
            <person name="Ikeo K."/>
            <person name="Iwama A."/>
            <person name="Ishikawa T."/>
            <person name="Jakt M."/>
            <person name="Kanapin A."/>
            <person name="Katoh M."/>
            <person name="Kawasawa Y."/>
            <person name="Kelso J."/>
            <person name="Kitamura H."/>
            <person name="Kitano H."/>
            <person name="Kollias G."/>
            <person name="Krishnan S.P."/>
            <person name="Kruger A."/>
            <person name="Kummerfeld S.K."/>
            <person name="Kurochkin I.V."/>
            <person name="Lareau L.F."/>
            <person name="Lazarevic D."/>
            <person name="Lipovich L."/>
            <person name="Liu J."/>
            <person name="Liuni S."/>
            <person name="McWilliam S."/>
            <person name="Madan Babu M."/>
            <person name="Madera M."/>
            <person name="Marchionni L."/>
            <person name="Matsuda H."/>
            <person name="Matsuzawa S."/>
            <person name="Miki H."/>
            <person name="Mignone F."/>
            <person name="Miyake S."/>
            <person name="Morris K."/>
            <person name="Mottagui-Tabar S."/>
            <person name="Mulder N."/>
            <person name="Nakano N."/>
            <person name="Nakauchi H."/>
            <person name="Ng P."/>
            <person name="Nilsson R."/>
            <person name="Nishiguchi S."/>
            <person name="Nishikawa S."/>
            <person name="Nori F."/>
            <person name="Ohara O."/>
            <person name="Okazaki Y."/>
            <person name="Orlando V."/>
            <person name="Pang K.C."/>
            <person name="Pavan W.J."/>
            <person name="Pavesi G."/>
            <person name="Pesole G."/>
            <person name="Petrovsky N."/>
            <person name="Piazza S."/>
            <person name="Reed J."/>
            <person name="Reid J.F."/>
            <person name="Ring B.Z."/>
            <person name="Ringwald M."/>
            <person name="Rost B."/>
            <person name="Ruan Y."/>
            <person name="Salzberg S.L."/>
            <person name="Sandelin A."/>
            <person name="Schneider C."/>
            <person name="Schoenbach C."/>
            <person name="Sekiguchi K."/>
            <person name="Semple C.A."/>
            <person name="Seno S."/>
            <person name="Sessa L."/>
            <person name="Sheng Y."/>
            <person name="Shibata Y."/>
            <person name="Shimada H."/>
            <person name="Shimada K."/>
            <person name="Silva D."/>
            <person name="Sinclair B."/>
            <person name="Sperling S."/>
            <person name="Stupka E."/>
            <person name="Sugiura K."/>
            <person name="Sultana R."/>
            <person name="Takenaka Y."/>
            <person name="Taki K."/>
            <person name="Tammoja K."/>
            <person name="Tan S.L."/>
            <person name="Tang S."/>
            <person name="Taylor M.S."/>
            <person name="Tegner J."/>
            <person name="Teichmann S.A."/>
            <person name="Ueda H.R."/>
            <person name="van Nimwegen E."/>
            <person name="Verardo R."/>
            <person name="Wei C.L."/>
            <person name="Yagi K."/>
            <person name="Yamanishi H."/>
            <person name="Zabarovsky E."/>
            <person name="Zhu S."/>
            <person name="Zimmer A."/>
            <person name="Hide W."/>
            <person name="Bult C."/>
            <person name="Grimmond S.M."/>
            <person name="Teasdale R.D."/>
            <person name="Liu E.T."/>
            <person name="Brusic V."/>
            <person name="Quackenbush J."/>
            <person name="Wahlestedt C."/>
            <person name="Mattick J.S."/>
            <person name="Hume D.A."/>
            <person name="Kai C."/>
            <person name="Sasaki D."/>
            <person name="Tomaru Y."/>
            <person name="Fukuda S."/>
            <person name="Kanamori-Katayama M."/>
            <person name="Suzuki M."/>
            <person name="Aoki J."/>
            <person name="Arakawa T."/>
            <person name="Iida J."/>
            <person name="Imamura K."/>
            <person name="Itoh M."/>
            <person name="Kato T."/>
            <person name="Kawaji H."/>
            <person name="Kawagashira N."/>
            <person name="Kawashima T."/>
            <person name="Kojima M."/>
            <person name="Kondo S."/>
            <person name="Konno H."/>
            <person name="Nakano K."/>
            <person name="Ninomiya N."/>
            <person name="Nishio T."/>
            <person name="Okada M."/>
            <person name="Plessy C."/>
            <person name="Shibata K."/>
            <person name="Shiraki T."/>
            <person name="Suzuki S."/>
            <person name="Tagami M."/>
            <person name="Waki K."/>
            <person name="Watahiki A."/>
            <person name="Okamura-Oho Y."/>
            <person name="Suzuki H."/>
            <person name="Kawai J."/>
            <person name="Hayashizaki Y."/>
        </authorList>
    </citation>
    <scope>NUCLEOTIDE SEQUENCE [LARGE SCALE MRNA] OF 484-1425</scope>
    <source>
        <strain>C57BL/6J</strain>
        <tissue>Heart</tissue>
        <tissue>Spinal cord</tissue>
    </source>
</reference>
<reference key="4">
    <citation type="journal article" date="2007" name="Science">
        <title>ATM and ATR substrate analysis reveals extensive protein networks responsive to DNA damage.</title>
        <authorList>
            <person name="Matsuoka S."/>
            <person name="Ballif B.A."/>
            <person name="Smogorzewska A."/>
            <person name="McDonald E.R. III"/>
            <person name="Hurov K.E."/>
            <person name="Luo J."/>
            <person name="Bakalarski C.E."/>
            <person name="Zhao Z."/>
            <person name="Solimini N."/>
            <person name="Lerenthal Y."/>
            <person name="Shiloh Y."/>
            <person name="Gygi S.P."/>
            <person name="Elledge S.J."/>
        </authorList>
    </citation>
    <scope>PHOSPHORYLATION [LARGE SCALE ANALYSIS] AT SER-352</scope>
    <scope>IDENTIFICATION BY MASS SPECTROMETRY [LARGE SCALE ANALYSIS]</scope>
    <source>
        <tissue>Embryonic fibroblast</tissue>
    </source>
</reference>
<reference key="5">
    <citation type="journal article" date="2009" name="Immunity">
        <title>The phagosomal proteome in interferon-gamma-activated macrophages.</title>
        <authorList>
            <person name="Trost M."/>
            <person name="English L."/>
            <person name="Lemieux S."/>
            <person name="Courcelles M."/>
            <person name="Desjardins M."/>
            <person name="Thibault P."/>
        </authorList>
    </citation>
    <scope>PHOSPHORYLATION [LARGE SCALE ANALYSIS] AT SER-104 AND SER-686</scope>
    <scope>IDENTIFICATION BY MASS SPECTROMETRY [LARGE SCALE ANALYSIS]</scope>
</reference>
<reference key="6">
    <citation type="journal article" date="2010" name="Cell">
        <title>A tissue-specific atlas of mouse protein phosphorylation and expression.</title>
        <authorList>
            <person name="Huttlin E.L."/>
            <person name="Jedrychowski M.P."/>
            <person name="Elias J.E."/>
            <person name="Goswami T."/>
            <person name="Rad R."/>
            <person name="Beausoleil S.A."/>
            <person name="Villen J."/>
            <person name="Haas W."/>
            <person name="Sowa M.E."/>
            <person name="Gygi S.P."/>
        </authorList>
    </citation>
    <scope>IDENTIFICATION BY MASS SPECTROMETRY [LARGE SCALE ANALYSIS]</scope>
    <source>
        <tissue>Brain</tissue>
        <tissue>Kidney</tissue>
        <tissue>Lung</tissue>
        <tissue>Spleen</tissue>
        <tissue>Testis</tissue>
    </source>
</reference>
<reference key="7">
    <citation type="journal article" date="2013" name="Mol. Cell">
        <title>SIRT5-mediated lysine desuccinylation impacts diverse metabolic pathways.</title>
        <authorList>
            <person name="Park J."/>
            <person name="Chen Y."/>
            <person name="Tishkoff D.X."/>
            <person name="Peng C."/>
            <person name="Tan M."/>
            <person name="Dai L."/>
            <person name="Xie Z."/>
            <person name="Zhang Y."/>
            <person name="Zwaans B.M."/>
            <person name="Skinner M.E."/>
            <person name="Lombard D.B."/>
            <person name="Zhao Y."/>
        </authorList>
    </citation>
    <scope>ACETYLATION [LARGE SCALE ANALYSIS] AT LYS-843</scope>
    <scope>IDENTIFICATION BY MASS SPECTROMETRY [LARGE SCALE ANALYSIS]</scope>
    <source>
        <tissue>Embryonic fibroblast</tissue>
    </source>
</reference>
<reference key="8">
    <citation type="journal article" date="2014" name="Mol. Cell. Proteomics">
        <title>Immunoaffinity enrichment and mass spectrometry analysis of protein methylation.</title>
        <authorList>
            <person name="Guo A."/>
            <person name="Gu H."/>
            <person name="Zhou J."/>
            <person name="Mulhern D."/>
            <person name="Wang Y."/>
            <person name="Lee K.A."/>
            <person name="Yang V."/>
            <person name="Aguiar M."/>
            <person name="Kornhauser J."/>
            <person name="Jia X."/>
            <person name="Ren J."/>
            <person name="Beausoleil S.A."/>
            <person name="Silva J.C."/>
            <person name="Vemulapalli V."/>
            <person name="Bedford M.T."/>
            <person name="Comb M.J."/>
        </authorList>
    </citation>
    <scope>METHYLATION [LARGE SCALE ANALYSIS] AT ARG-800</scope>
    <scope>IDENTIFICATION BY MASS SPECTROMETRY [LARGE SCALE ANALYSIS]</scope>
    <source>
        <tissue>Embryo</tissue>
    </source>
</reference>
<comment type="function">
    <text evidence="1 4">Promotes beta-catenin's transcriptional activity. Involved in signal transduction through the Wnt pathway (By similarity).</text>
</comment>
<comment type="subunit">
    <text evidence="1">Binds to beta-catenin (CTNNB1), PYGO1 and PYGO2; the interaction with PYGO1 increases PYGO1 affinity to histone H3 methylated at 'Lys 4'.</text>
</comment>
<comment type="subcellular location">
    <subcellularLocation>
        <location evidence="4">Nucleus</location>
    </subcellularLocation>
</comment>
<comment type="similarity">
    <text evidence="5">Belongs to the BCL9 family.</text>
</comment>
<comment type="sequence caution" evidence="5">
    <conflict type="erroneous initiation">
        <sequence resource="EMBL-CDS" id="AAH19641"/>
    </conflict>
    <text>Truncated N-terminus.</text>
</comment>
<proteinExistence type="evidence at protein level"/>
<feature type="chain" id="PRO_0000064886" description="B-cell CLL/lymphoma 9 protein">
    <location>
        <begin position="1"/>
        <end position="1425"/>
    </location>
</feature>
<feature type="region of interest" description="Disordered" evidence="3">
    <location>
        <begin position="1"/>
        <end position="172"/>
    </location>
</feature>
<feature type="region of interest" description="Interaction with PYGO1" evidence="1">
    <location>
        <begin position="177"/>
        <end position="205"/>
    </location>
</feature>
<feature type="region of interest" description="Disordered" evidence="3">
    <location>
        <begin position="207"/>
        <end position="441"/>
    </location>
</feature>
<feature type="region of interest" description="Interaction with CTNNB1" evidence="1">
    <location>
        <begin position="358"/>
        <end position="374"/>
    </location>
</feature>
<feature type="region of interest" description="Disordered" evidence="3">
    <location>
        <begin position="577"/>
        <end position="624"/>
    </location>
</feature>
<feature type="region of interest" description="Disordered" evidence="3">
    <location>
        <begin position="781"/>
        <end position="1003"/>
    </location>
</feature>
<feature type="region of interest" description="Disordered" evidence="3">
    <location>
        <begin position="1031"/>
        <end position="1051"/>
    </location>
</feature>
<feature type="region of interest" description="Disordered" evidence="3">
    <location>
        <begin position="1153"/>
        <end position="1199"/>
    </location>
</feature>
<feature type="region of interest" description="Disordered" evidence="3">
    <location>
        <begin position="1252"/>
        <end position="1275"/>
    </location>
</feature>
<feature type="compositionally biased region" description="Polar residues" evidence="3">
    <location>
        <begin position="7"/>
        <end position="21"/>
    </location>
</feature>
<feature type="compositionally biased region" description="Polar residues" evidence="3">
    <location>
        <begin position="34"/>
        <end position="48"/>
    </location>
</feature>
<feature type="compositionally biased region" description="Low complexity" evidence="3">
    <location>
        <begin position="54"/>
        <end position="63"/>
    </location>
</feature>
<feature type="compositionally biased region" description="Gly residues" evidence="3">
    <location>
        <begin position="78"/>
        <end position="94"/>
    </location>
</feature>
<feature type="compositionally biased region" description="Basic and acidic residues" evidence="3">
    <location>
        <begin position="100"/>
        <end position="112"/>
    </location>
</feature>
<feature type="compositionally biased region" description="Basic and acidic residues" evidence="3">
    <location>
        <begin position="120"/>
        <end position="135"/>
    </location>
</feature>
<feature type="compositionally biased region" description="Low complexity" evidence="3">
    <location>
        <begin position="144"/>
        <end position="157"/>
    </location>
</feature>
<feature type="compositionally biased region" description="Polar residues" evidence="3">
    <location>
        <begin position="207"/>
        <end position="226"/>
    </location>
</feature>
<feature type="compositionally biased region" description="Pro residues" evidence="3">
    <location>
        <begin position="232"/>
        <end position="241"/>
    </location>
</feature>
<feature type="compositionally biased region" description="Pro residues" evidence="3">
    <location>
        <begin position="256"/>
        <end position="270"/>
    </location>
</feature>
<feature type="compositionally biased region" description="Polar residues" evidence="3">
    <location>
        <begin position="304"/>
        <end position="320"/>
    </location>
</feature>
<feature type="compositionally biased region" description="Basic and acidic residues" evidence="3">
    <location>
        <begin position="355"/>
        <end position="380"/>
    </location>
</feature>
<feature type="compositionally biased region" description="Low complexity" evidence="3">
    <location>
        <begin position="822"/>
        <end position="835"/>
    </location>
</feature>
<feature type="compositionally biased region" description="Polar residues" evidence="3">
    <location>
        <begin position="866"/>
        <end position="890"/>
    </location>
</feature>
<feature type="compositionally biased region" description="Low complexity" evidence="3">
    <location>
        <begin position="891"/>
        <end position="902"/>
    </location>
</feature>
<feature type="compositionally biased region" description="Pro residues" evidence="3">
    <location>
        <begin position="936"/>
        <end position="946"/>
    </location>
</feature>
<feature type="compositionally biased region" description="Gly residues" evidence="3">
    <location>
        <begin position="1157"/>
        <end position="1175"/>
    </location>
</feature>
<feature type="modified residue" description="Phosphoserine" evidence="7">
    <location>
        <position position="104"/>
    </location>
</feature>
<feature type="modified residue" description="Phosphoserine" evidence="2">
    <location>
        <position position="157"/>
    </location>
</feature>
<feature type="modified residue" description="Phosphothreonine" evidence="2">
    <location>
        <position position="172"/>
    </location>
</feature>
<feature type="modified residue" description="Phosphothreonine" evidence="2">
    <location>
        <position position="315"/>
    </location>
</feature>
<feature type="modified residue" description="Phosphoserine" evidence="2">
    <location>
        <position position="318"/>
    </location>
</feature>
<feature type="modified residue" description="Phosphoserine" evidence="6">
    <location>
        <position position="352"/>
    </location>
</feature>
<feature type="modified residue" description="Phosphoserine" evidence="7">
    <location>
        <position position="686"/>
    </location>
</feature>
<feature type="modified residue" description="Phosphoserine" evidence="2">
    <location>
        <position position="688"/>
    </location>
</feature>
<feature type="modified residue" description="Asymmetric dimethylarginine" evidence="9">
    <location>
        <position position="800"/>
    </location>
</feature>
<feature type="modified residue" description="N6-acetyllysine" evidence="8">
    <location>
        <position position="843"/>
    </location>
</feature>
<feature type="modified residue" description="Phosphoserine" evidence="2">
    <location>
        <position position="906"/>
    </location>
</feature>
<feature type="modified residue" description="Phosphoserine" evidence="2">
    <location>
        <position position="916"/>
    </location>
</feature>
<feature type="sequence conflict" description="In Ref. 3; BAB32190." evidence="5" ref="3">
    <original>M</original>
    <variation>V</variation>
    <location>
        <position position="1134"/>
    </location>
</feature>
<accession>Q9D219</accession>
<accession>B2RQC0</accession>
<accession>Q67FX9</accession>
<accession>Q8BUJ8</accession>
<accession>Q8VE74</accession>
<dbReference type="EMBL" id="AY296061">
    <property type="protein sequence ID" value="AAQ62699.1"/>
    <property type="molecule type" value="mRNA"/>
</dbReference>
<dbReference type="EMBL" id="BC019641">
    <property type="protein sequence ID" value="AAH19641.1"/>
    <property type="status" value="ALT_INIT"/>
    <property type="molecule type" value="mRNA"/>
</dbReference>
<dbReference type="EMBL" id="BC137850">
    <property type="protein sequence ID" value="AAI37851.1"/>
    <property type="molecule type" value="mRNA"/>
</dbReference>
<dbReference type="EMBL" id="AK020724">
    <property type="protein sequence ID" value="BAB32190.1"/>
    <property type="molecule type" value="mRNA"/>
</dbReference>
<dbReference type="EMBL" id="AK084676">
    <property type="protein sequence ID" value="BAC39248.1"/>
    <property type="molecule type" value="mRNA"/>
</dbReference>
<dbReference type="CCDS" id="CCDS17654.1"/>
<dbReference type="RefSeq" id="NP_001416153.1">
    <property type="nucleotide sequence ID" value="NM_001429224.1"/>
</dbReference>
<dbReference type="RefSeq" id="NP_001416156.1">
    <property type="nucleotide sequence ID" value="NM_001429227.1"/>
</dbReference>
<dbReference type="RefSeq" id="NP_084209.3">
    <property type="nucleotide sequence ID" value="NM_029933.4"/>
</dbReference>
<dbReference type="RefSeq" id="XP_006502351.1">
    <property type="nucleotide sequence ID" value="XM_006502288.3"/>
</dbReference>
<dbReference type="RefSeq" id="XP_006502352.1">
    <property type="nucleotide sequence ID" value="XM_006502289.3"/>
</dbReference>
<dbReference type="RefSeq" id="XP_006502353.1">
    <property type="nucleotide sequence ID" value="XM_006502290.4"/>
</dbReference>
<dbReference type="SMR" id="Q9D219"/>
<dbReference type="BioGRID" id="218773">
    <property type="interactions" value="3"/>
</dbReference>
<dbReference type="FunCoup" id="Q9D219">
    <property type="interactions" value="2720"/>
</dbReference>
<dbReference type="IntAct" id="Q9D219">
    <property type="interactions" value="2"/>
</dbReference>
<dbReference type="STRING" id="10090.ENSMUSP00000046152"/>
<dbReference type="GlyGen" id="Q9D219">
    <property type="glycosylation" value="5 sites, 1 O-linked glycan (2 sites)"/>
</dbReference>
<dbReference type="iPTMnet" id="Q9D219"/>
<dbReference type="PhosphoSitePlus" id="Q9D219"/>
<dbReference type="jPOST" id="Q9D219"/>
<dbReference type="PaxDb" id="10090-ENSMUSP00000046152"/>
<dbReference type="PeptideAtlas" id="Q9D219"/>
<dbReference type="ProteomicsDB" id="273551"/>
<dbReference type="Pumba" id="Q9D219"/>
<dbReference type="Antibodypedia" id="20242">
    <property type="antibodies" value="162 antibodies from 25 providers"/>
</dbReference>
<dbReference type="DNASU" id="77578"/>
<dbReference type="Ensembl" id="ENSMUST00000046521.14">
    <property type="protein sequence ID" value="ENSMUSP00000046152.8"/>
    <property type="gene ID" value="ENSMUSG00000038256.16"/>
</dbReference>
<dbReference type="Ensembl" id="ENSMUST00000166341.2">
    <property type="protein sequence ID" value="ENSMUSP00000131692.2"/>
    <property type="gene ID" value="ENSMUSG00000038256.16"/>
</dbReference>
<dbReference type="GeneID" id="77578"/>
<dbReference type="KEGG" id="mmu:77578"/>
<dbReference type="UCSC" id="uc008qot.2">
    <property type="organism name" value="mouse"/>
</dbReference>
<dbReference type="AGR" id="MGI:1924828"/>
<dbReference type="CTD" id="607"/>
<dbReference type="MGI" id="MGI:1924828">
    <property type="gene designation" value="Bcl9"/>
</dbReference>
<dbReference type="VEuPathDB" id="HostDB:ENSMUSG00000038256"/>
<dbReference type="eggNOG" id="ENOG502QREN">
    <property type="taxonomic scope" value="Eukaryota"/>
</dbReference>
<dbReference type="GeneTree" id="ENSGT00730000110915"/>
<dbReference type="HOGENOM" id="CLU_004930_1_0_1"/>
<dbReference type="InParanoid" id="Q9D219"/>
<dbReference type="OMA" id="ECNSTEH"/>
<dbReference type="OrthoDB" id="7668649at2759"/>
<dbReference type="PhylomeDB" id="Q9D219"/>
<dbReference type="TreeFam" id="TF331144"/>
<dbReference type="Reactome" id="R-MMU-201722">
    <property type="pathway name" value="Formation of the beta-catenin:TCF transactivating complex"/>
</dbReference>
<dbReference type="BioGRID-ORCS" id="77578">
    <property type="hits" value="6 hits in 79 CRISPR screens"/>
</dbReference>
<dbReference type="ChiTaRS" id="Bcl9">
    <property type="organism name" value="mouse"/>
</dbReference>
<dbReference type="PRO" id="PR:Q9D219"/>
<dbReference type="Proteomes" id="UP000000589">
    <property type="component" value="Chromosome 3"/>
</dbReference>
<dbReference type="RNAct" id="Q9D219">
    <property type="molecule type" value="protein"/>
</dbReference>
<dbReference type="Bgee" id="ENSMUSG00000038256">
    <property type="expression patterns" value="Expressed in undifferentiated genital tubercle and 225 other cell types or tissues"/>
</dbReference>
<dbReference type="GO" id="GO:1990907">
    <property type="term" value="C:beta-catenin-TCF complex"/>
    <property type="evidence" value="ECO:0007669"/>
    <property type="project" value="Ensembl"/>
</dbReference>
<dbReference type="GO" id="GO:0005801">
    <property type="term" value="C:cis-Golgi network"/>
    <property type="evidence" value="ECO:0000314"/>
    <property type="project" value="MGI"/>
</dbReference>
<dbReference type="GO" id="GO:0005737">
    <property type="term" value="C:cytoplasm"/>
    <property type="evidence" value="ECO:0000314"/>
    <property type="project" value="MGI"/>
</dbReference>
<dbReference type="GO" id="GO:0005794">
    <property type="term" value="C:Golgi apparatus"/>
    <property type="evidence" value="ECO:0000314"/>
    <property type="project" value="MGI"/>
</dbReference>
<dbReference type="GO" id="GO:0005634">
    <property type="term" value="C:nucleus"/>
    <property type="evidence" value="ECO:0000314"/>
    <property type="project" value="MGI"/>
</dbReference>
<dbReference type="GO" id="GO:0016528">
    <property type="term" value="C:sarcoplasm"/>
    <property type="evidence" value="ECO:0000314"/>
    <property type="project" value="MGI"/>
</dbReference>
<dbReference type="GO" id="GO:0008013">
    <property type="term" value="F:beta-catenin binding"/>
    <property type="evidence" value="ECO:0000353"/>
    <property type="project" value="MGI"/>
</dbReference>
<dbReference type="GO" id="GO:0003713">
    <property type="term" value="F:transcription coactivator activity"/>
    <property type="evidence" value="ECO:0007669"/>
    <property type="project" value="InterPro"/>
</dbReference>
<dbReference type="GO" id="GO:0060070">
    <property type="term" value="P:canonical Wnt signaling pathway"/>
    <property type="evidence" value="ECO:0000316"/>
    <property type="project" value="MGI"/>
</dbReference>
<dbReference type="GO" id="GO:0045445">
    <property type="term" value="P:myoblast differentiation"/>
    <property type="evidence" value="ECO:0000316"/>
    <property type="project" value="MGI"/>
</dbReference>
<dbReference type="GO" id="GO:0014908">
    <property type="term" value="P:myotube differentiation involved in skeletal muscle regeneration"/>
    <property type="evidence" value="ECO:0000316"/>
    <property type="project" value="MGI"/>
</dbReference>
<dbReference type="GO" id="GO:0045944">
    <property type="term" value="P:positive regulation of transcription by RNA polymerase II"/>
    <property type="evidence" value="ECO:0000316"/>
    <property type="project" value="MGI"/>
</dbReference>
<dbReference type="GO" id="GO:0035914">
    <property type="term" value="P:skeletal muscle cell differentiation"/>
    <property type="evidence" value="ECO:0000316"/>
    <property type="project" value="MGI"/>
</dbReference>
<dbReference type="GO" id="GO:0035019">
    <property type="term" value="P:somatic stem cell population maintenance"/>
    <property type="evidence" value="ECO:0000316"/>
    <property type="project" value="MGI"/>
</dbReference>
<dbReference type="GO" id="GO:0006366">
    <property type="term" value="P:transcription by RNA polymerase II"/>
    <property type="evidence" value="ECO:0000316"/>
    <property type="project" value="MGI"/>
</dbReference>
<dbReference type="FunFam" id="3.30.40.10:FF:000190">
    <property type="entry name" value="B-cell CLL/lymphoma 9, isoform CRA_a"/>
    <property type="match status" value="1"/>
</dbReference>
<dbReference type="Gene3D" id="3.30.40.10">
    <property type="entry name" value="Zinc/RING finger domain, C3HC4 (zinc finger)"/>
    <property type="match status" value="1"/>
</dbReference>
<dbReference type="InterPro" id="IPR015668">
    <property type="entry name" value="Bcl-9/Bcl-9l"/>
</dbReference>
<dbReference type="InterPro" id="IPR024670">
    <property type="entry name" value="BCL9_beta-catenin-bd_dom"/>
</dbReference>
<dbReference type="InterPro" id="IPR013083">
    <property type="entry name" value="Znf_RING/FYVE/PHD"/>
</dbReference>
<dbReference type="PANTHER" id="PTHR15185:SF5">
    <property type="entry name" value="B-CELL CLL_LYMPHOMA 9 PROTEIN"/>
    <property type="match status" value="1"/>
</dbReference>
<dbReference type="PANTHER" id="PTHR15185">
    <property type="entry name" value="BCL9"/>
    <property type="match status" value="1"/>
</dbReference>
<dbReference type="Pfam" id="PF11502">
    <property type="entry name" value="BCL9"/>
    <property type="match status" value="1"/>
</dbReference>
<gene>
    <name type="primary">Bcl9</name>
</gene>
<sequence>MHPSNPKVRSSPSGNTQSSPKSKQEVMVRPPTVMSPSGNPQLDSKFSNQGKPGGSASQSQPSPCDSKSGGHTPKALPGPGGSMGLKNGAGNGAKGKGKRERSISADSFDQRDPGTPNDDSDIKECNSADHIKSQESQHTPHSMTPSTATAPRSSTPSHGQTPAPEPISAQKTPAKVVYVFSTEMANKAAEAVLKGQVETIVSFHIQNISNSKSERSTAPLNTQIPTLRNDPKPLPQQPPAPANQDQNSSQNARLQPTPPIQAPAPKPTAAPRPLDRESPGVENKLIPPVGSPGSSTPLPPDGTGPNSTPNNRAVTPVSQGSNSSSADPKAPPPPPVSGGEPPTLGENPDGLSQEQLEHRERSLQTLRDIQRMLFPDEKEFTAGQTGGPQQNTGVLDGPQKKPDGPIQAMMSQSQSLGKGPGPRTDVGAPFGPQGHRDVPFSPDEMVPPNMSSQSGPIGPDHLDHMTPEQIAWLKLQQEFYEEKRRKQEQVVVQQCSLQDMMVHQHGPRGVVRGPPPPYQMAPGEGWAPGAEPFPDGINISHSLPPRGMAPHPNMPGSQMRLPGFAGMINSEMEGPNVPNPASRPGLSGVSWPDDVPKIPDGRNFPPGQGVFSGPGRGERFPNPQGLSEEMFQQQLAEKQLALPPGMSMEGIRPGMEMNRMIPGSQRHMEPGSNPIFPRIPVEGPLSPSRGDFPKGMPPQIGPGRELEFGMVPGGMKGEVNLNVNMGSSSQMIPQKMREAGAGPEEMMKLRPGSSEMLPAQQKMVPLPFGEHPQQEYGVGPRPFLPMSQGPGSNSGLRNLREPIGPDQRTNSRLSHMPPLPLNPSSNPTSLSTAPPVQRGLGRKPLDISVAGSQVHSPGINPLKSPTMHQVQSPMLGSPSGNLKSPQTPSQLAGMLAGPAAAASIKSPPVLGSAAASPVHLKSPSLPAPSPGWTSSPKPPLQSPGIPPNHKAPLTMASPAMLGSVESGGPPPPTASQPASVNIPGSLPSSTPYPMPPEPTLSQNPLSIMMSRMSKFAMPSSTPLYHDAIKTVASSDDDSPPARSPNLPSMNSMPGMGINTQNPRISGPNPVVPMPTLSPMGMTQPLSHSNQMPSPNAMGPSIPPHGVPMGPGLMSHNPIMGHGSQEPPMVPQGRMGFPQGFPPVQSPPQQVPFPHNGPTGGQGNFPGGIGFPGEGPLGRPSNLPQSSADPALCKPGGPGAPDSFTVLGNSMPSVFTDPDLQEVIRPGATGIPEFDLSRIIPSEKPSQTLQYFPRGEVPGRKQPQGPGPGFSHMQGMMSDQAPRMGLALPGMGGPGPVGTPDIPLGTSPSMPGHNPMRPPAFLQQGMMGPHHRMMSPAQSTVPGPATLMTNPAAAVGMIPGKDRGPAGLYTHPGPVGSPGMMMSMQGMMGPQQNIMIPPQMRPRGMAADVGMGGFSQGPGNPGNMMF</sequence>